<proteinExistence type="evidence at transcript level"/>
<accession>C0JB91</accession>
<sequence>WIMGHMVNGLEQVSEFLNLGANAIEFDIDFDNNGIAKITHHGIPCDCGRLCTKQTVFTEYLDNIRHVTTPGDPKFREQLILLALDLKLQRIPVEKAYAAGVDVATKLLDHYWQRGKSKARAYILLNIPLVEDYEFIRAFKDMLKNEGYEQYNDKVGVNFTGNEDLDEIRKVLEKVGVDKHVWQADGITSCFTRGTDRLTEALKRRDTPGYNYAYKVYAWTLVKYSTMRRSLRLGVDGVMSNYPDRVVEVLKEEEFAGKFRMATYDDNPWKKFTS</sequence>
<keyword id="KW-0204">Cytolysis</keyword>
<keyword id="KW-1061">Dermonecrotic toxin</keyword>
<keyword id="KW-1015">Disulfide bond</keyword>
<keyword id="KW-0354">Hemolysis</keyword>
<keyword id="KW-0442">Lipid degradation</keyword>
<keyword id="KW-0443">Lipid metabolism</keyword>
<keyword id="KW-0456">Lyase</keyword>
<keyword id="KW-0460">Magnesium</keyword>
<keyword id="KW-0479">Metal-binding</keyword>
<keyword id="KW-0964">Secreted</keyword>
<keyword id="KW-0800">Toxin</keyword>
<name>B2K_SICAL</name>
<protein>
    <recommendedName>
        <fullName evidence="6">Dermonecrotic toxin SaSicTox-betaIIB1</fullName>
        <ecNumber evidence="4">4.6.1.-</ecNumber>
    </recommendedName>
    <alternativeName>
        <fullName>Phospholipase D</fullName>
        <shortName>PLD</shortName>
    </alternativeName>
    <alternativeName>
        <fullName>Sphingomyelin phosphodiesterase D</fullName>
        <shortName>SMD</shortName>
        <shortName>SMase D</shortName>
        <shortName>Sphingomyelinase D</shortName>
    </alternativeName>
</protein>
<dbReference type="EC" id="4.6.1.-" evidence="4"/>
<dbReference type="EMBL" id="FJ171526">
    <property type="protein sequence ID" value="ACN49022.1"/>
    <property type="molecule type" value="mRNA"/>
</dbReference>
<dbReference type="SMR" id="C0JB91"/>
<dbReference type="ArachnoServer" id="AS001199">
    <property type="toxin name" value="SicTox-SabetaIIB1 (fragment)"/>
</dbReference>
<dbReference type="GO" id="GO:0005576">
    <property type="term" value="C:extracellular region"/>
    <property type="evidence" value="ECO:0007669"/>
    <property type="project" value="UniProtKB-SubCell"/>
</dbReference>
<dbReference type="GO" id="GO:0016829">
    <property type="term" value="F:lyase activity"/>
    <property type="evidence" value="ECO:0007669"/>
    <property type="project" value="UniProtKB-KW"/>
</dbReference>
<dbReference type="GO" id="GO:0046872">
    <property type="term" value="F:metal ion binding"/>
    <property type="evidence" value="ECO:0007669"/>
    <property type="project" value="UniProtKB-KW"/>
</dbReference>
<dbReference type="GO" id="GO:0008081">
    <property type="term" value="F:phosphoric diester hydrolase activity"/>
    <property type="evidence" value="ECO:0007669"/>
    <property type="project" value="InterPro"/>
</dbReference>
<dbReference type="GO" id="GO:0090729">
    <property type="term" value="F:toxin activity"/>
    <property type="evidence" value="ECO:0007669"/>
    <property type="project" value="UniProtKB-KW"/>
</dbReference>
<dbReference type="GO" id="GO:0031640">
    <property type="term" value="P:killing of cells of another organism"/>
    <property type="evidence" value="ECO:0007669"/>
    <property type="project" value="UniProtKB-KW"/>
</dbReference>
<dbReference type="GO" id="GO:0016042">
    <property type="term" value="P:lipid catabolic process"/>
    <property type="evidence" value="ECO:0007669"/>
    <property type="project" value="UniProtKB-KW"/>
</dbReference>
<dbReference type="CDD" id="cd08576">
    <property type="entry name" value="GDPD_like_SMaseD_PLD"/>
    <property type="match status" value="1"/>
</dbReference>
<dbReference type="Gene3D" id="3.20.20.190">
    <property type="entry name" value="Phosphatidylinositol (PI) phosphodiesterase"/>
    <property type="match status" value="1"/>
</dbReference>
<dbReference type="InterPro" id="IPR017946">
    <property type="entry name" value="PLC-like_Pdiesterase_TIM-brl"/>
</dbReference>
<dbReference type="SUPFAM" id="SSF51695">
    <property type="entry name" value="PLC-like phosphodiesterases"/>
    <property type="match status" value="1"/>
</dbReference>
<evidence type="ECO:0000250" key="1">
    <source>
        <dbReference type="UniProtKB" id="A0A0D4WTV1"/>
    </source>
</evidence>
<evidence type="ECO:0000250" key="2">
    <source>
        <dbReference type="UniProtKB" id="A0A0D4WV12"/>
    </source>
</evidence>
<evidence type="ECO:0000250" key="3">
    <source>
        <dbReference type="UniProtKB" id="P0CE80"/>
    </source>
</evidence>
<evidence type="ECO:0000250" key="4">
    <source>
        <dbReference type="UniProtKB" id="Q4ZFU2"/>
    </source>
</evidence>
<evidence type="ECO:0000250" key="5">
    <source>
        <dbReference type="UniProtKB" id="Q8I914"/>
    </source>
</evidence>
<evidence type="ECO:0000303" key="6">
    <source>
    </source>
</evidence>
<evidence type="ECO:0000305" key="7"/>
<evidence type="ECO:0000305" key="8">
    <source>
    </source>
</evidence>
<feature type="chain" id="PRO_0000392900" description="Dermonecrotic toxin SaSicTox-betaIIB1">
    <location>
        <begin position="1" status="less than"/>
        <end position="274"/>
    </location>
</feature>
<feature type="active site" evidence="5">
    <location>
        <position position="5"/>
    </location>
</feature>
<feature type="active site" description="Nucleophile" evidence="5">
    <location>
        <position position="41"/>
    </location>
</feature>
<feature type="binding site" evidence="5">
    <location>
        <position position="25"/>
    </location>
    <ligand>
        <name>Mg(2+)</name>
        <dbReference type="ChEBI" id="CHEBI:18420"/>
    </ligand>
</feature>
<feature type="binding site" evidence="5">
    <location>
        <position position="27"/>
    </location>
    <ligand>
        <name>Mg(2+)</name>
        <dbReference type="ChEBI" id="CHEBI:18420"/>
    </ligand>
</feature>
<feature type="binding site" evidence="5">
    <location>
        <position position="85"/>
    </location>
    <ligand>
        <name>Mg(2+)</name>
        <dbReference type="ChEBI" id="CHEBI:18420"/>
    </ligand>
</feature>
<feature type="disulfide bond" evidence="3">
    <location>
        <begin position="45"/>
        <end position="51"/>
    </location>
</feature>
<feature type="disulfide bond" evidence="3">
    <location>
        <begin position="47"/>
        <end position="190"/>
    </location>
</feature>
<feature type="non-terminal residue">
    <location>
        <position position="1"/>
    </location>
</feature>
<reference key="1">
    <citation type="journal article" date="2009" name="Mol. Biol. Evol.">
        <title>Molecular evolution, functional variation, and proposed nomenclature of the gene family that includes sphingomyelinase D in sicariid spider venoms.</title>
        <authorList>
            <person name="Binford G.J."/>
            <person name="Bodner M.R."/>
            <person name="Cordes M.H."/>
            <person name="Baldwin K.L."/>
            <person name="Rynerson M.R."/>
            <person name="Burns S.N."/>
            <person name="Zobel-Thropp P.A."/>
        </authorList>
    </citation>
    <scope>NUCLEOTIDE SEQUENCE [MRNA]</scope>
    <scope>NOMENCLATURE</scope>
    <source>
        <tissue>Venom gland</tissue>
    </source>
</reference>
<organism>
    <name type="scientific">Sicarius albospinosus</name>
    <name type="common">Six-eyed crab spider</name>
    <dbReference type="NCBI Taxonomy" id="571536"/>
    <lineage>
        <taxon>Eukaryota</taxon>
        <taxon>Metazoa</taxon>
        <taxon>Ecdysozoa</taxon>
        <taxon>Arthropoda</taxon>
        <taxon>Chelicerata</taxon>
        <taxon>Arachnida</taxon>
        <taxon>Araneae</taxon>
        <taxon>Araneomorphae</taxon>
        <taxon>Haplogynae</taxon>
        <taxon>Scytodoidea</taxon>
        <taxon>Sicariidae</taxon>
        <taxon>Sicarius</taxon>
    </lineage>
</organism>
<comment type="function">
    <text evidence="1 3">Dermonecrotic toxins cleave the phosphodiester linkage between the phosphate and headgroup of certain phospholipids (sphingolipid and lysolipid substrates), forming an alcohol (often choline) and a cyclic phosphate (By similarity). This toxin acts on sphingomyelin (SM) (By similarity). It may also act on ceramide phosphoethanolamine (CPE), lysophosphatidylcholine (LPC) and lysophosphatidylethanolamine (LPE), but not on lysophosphatidylserine (LPS), and lysophosphatidylglycerol (LPG) (By similarity). It acts by transphosphatidylation, releasing exclusively cyclic phosphate products as second products (By similarity). Induces dermonecrosis, hemolysis, increased vascular permeability, edema, inflammatory response, and platelet aggregation (By similarity).</text>
</comment>
<comment type="catalytic activity">
    <reaction evidence="1">
        <text>an N-(acyl)-sphingosylphosphocholine = an N-(acyl)-sphingosyl-1,3-cyclic phosphate + choline</text>
        <dbReference type="Rhea" id="RHEA:60652"/>
        <dbReference type="ChEBI" id="CHEBI:15354"/>
        <dbReference type="ChEBI" id="CHEBI:64583"/>
        <dbReference type="ChEBI" id="CHEBI:143892"/>
    </reaction>
</comment>
<comment type="catalytic activity">
    <reaction evidence="1">
        <text>an N-(acyl)-sphingosylphosphoethanolamine = an N-(acyl)-sphingosyl-1,3-cyclic phosphate + ethanolamine</text>
        <dbReference type="Rhea" id="RHEA:60648"/>
        <dbReference type="ChEBI" id="CHEBI:57603"/>
        <dbReference type="ChEBI" id="CHEBI:143891"/>
        <dbReference type="ChEBI" id="CHEBI:143892"/>
    </reaction>
</comment>
<comment type="catalytic activity">
    <reaction evidence="1">
        <text>a 1-acyl-sn-glycero-3-phosphocholine = a 1-acyl-sn-glycero-2,3-cyclic phosphate + choline</text>
        <dbReference type="Rhea" id="RHEA:60700"/>
        <dbReference type="ChEBI" id="CHEBI:15354"/>
        <dbReference type="ChEBI" id="CHEBI:58168"/>
        <dbReference type="ChEBI" id="CHEBI:143947"/>
    </reaction>
</comment>
<comment type="catalytic activity">
    <reaction evidence="1">
        <text>a 1-acyl-sn-glycero-3-phosphoethanolamine = a 1-acyl-sn-glycero-2,3-cyclic phosphate + ethanolamine</text>
        <dbReference type="Rhea" id="RHEA:60704"/>
        <dbReference type="ChEBI" id="CHEBI:57603"/>
        <dbReference type="ChEBI" id="CHEBI:64381"/>
        <dbReference type="ChEBI" id="CHEBI:143947"/>
    </reaction>
</comment>
<comment type="cofactor">
    <cofactor evidence="5">
        <name>Mg(2+)</name>
        <dbReference type="ChEBI" id="CHEBI:18420"/>
    </cofactor>
    <text evidence="5">Binds 1 Mg(2+) ion per subunit.</text>
</comment>
<comment type="subcellular location">
    <subcellularLocation>
        <location evidence="8">Secreted</location>
    </subcellularLocation>
</comment>
<comment type="tissue specificity">
    <text evidence="8">Expressed by the venom gland.</text>
</comment>
<comment type="similarity">
    <text evidence="7">Belongs to the arthropod phospholipase D family. Class II subfamily.</text>
</comment>
<comment type="caution">
    <text evidence="1 2 4">The most common activity assay for dermonecrotic toxins detects enzymatic activity by monitoring choline release from substrate. Liberation of choline from sphingomyelin (SM) or lysophosphatidylcholine (LPC) is commonly assumed to result from substrate hydrolysis, giving either ceramide-1-phosphate (C1P) or lysophosphatidic acid (LPA), respectively, as a second product. However, two studies from Lajoie and colleagues (2013 and 2015) report the observation of exclusive formation of cyclic phosphate products as second products, resulting from intramolecular transphosphatidylation. Cyclic phosphates have vastly different biological properties from their monoester counterparts, and they may be relevant to the pathology of brown spider envenomation.</text>
</comment>